<comment type="function">
    <text evidence="1">Catalyzes the reversible interconversion of serine and glycine with tetrahydrofolate (THF) serving as the one-carbon carrier. This reaction serves as the major source of one-carbon groups required for the biosynthesis of purines, thymidylate, methionine, and other important biomolecules. Also exhibits THF-independent aldolase activity toward beta-hydroxyamino acids, producing glycine and aldehydes, via a retro-aldol mechanism.</text>
</comment>
<comment type="catalytic activity">
    <reaction evidence="1">
        <text>(6R)-5,10-methylene-5,6,7,8-tetrahydrofolate + glycine + H2O = (6S)-5,6,7,8-tetrahydrofolate + L-serine</text>
        <dbReference type="Rhea" id="RHEA:15481"/>
        <dbReference type="ChEBI" id="CHEBI:15377"/>
        <dbReference type="ChEBI" id="CHEBI:15636"/>
        <dbReference type="ChEBI" id="CHEBI:33384"/>
        <dbReference type="ChEBI" id="CHEBI:57305"/>
        <dbReference type="ChEBI" id="CHEBI:57453"/>
        <dbReference type="EC" id="2.1.2.1"/>
    </reaction>
</comment>
<comment type="cofactor">
    <cofactor evidence="1">
        <name>pyridoxal 5'-phosphate</name>
        <dbReference type="ChEBI" id="CHEBI:597326"/>
    </cofactor>
</comment>
<comment type="pathway">
    <text evidence="1">One-carbon metabolism; tetrahydrofolate interconversion.</text>
</comment>
<comment type="pathway">
    <text evidence="1">Amino-acid biosynthesis; glycine biosynthesis; glycine from L-serine: step 1/1.</text>
</comment>
<comment type="subunit">
    <text evidence="1">Homodimer.</text>
</comment>
<comment type="subcellular location">
    <subcellularLocation>
        <location evidence="1">Cytoplasm</location>
    </subcellularLocation>
</comment>
<comment type="similarity">
    <text evidence="1">Belongs to the SHMT family.</text>
</comment>
<organism>
    <name type="scientific">Sorangium cellulosum (strain So ce56)</name>
    <name type="common">Polyangium cellulosum (strain So ce56)</name>
    <dbReference type="NCBI Taxonomy" id="448385"/>
    <lineage>
        <taxon>Bacteria</taxon>
        <taxon>Pseudomonadati</taxon>
        <taxon>Myxococcota</taxon>
        <taxon>Polyangia</taxon>
        <taxon>Polyangiales</taxon>
        <taxon>Polyangiaceae</taxon>
        <taxon>Sorangium</taxon>
    </lineage>
</organism>
<gene>
    <name evidence="1" type="primary">glyA</name>
    <name type="ordered locus">sce6587</name>
</gene>
<proteinExistence type="inferred from homology"/>
<name>GLYA_SORC5</name>
<sequence length="423" mass="45529">MSVTSEVQGLRALNEVDPEIAELIRLEERREADTLRLIASENYVSRAVLEATGSVLTNKYSEGYPHKRYYEGQQQVDVVEELARTRVAKLFGADHVNVQPYSGSPANLAVYLAFAQANDTIMGLGLPAGGHLTHGWSVSITGKYFKSVPYGVRESDHRIDLDQVRDLARAHRPKLIWCGTTAYPRTLDFAAFRAIADEVGAILAADIAHIAGLVAAGVHPSPVGIADVVTSTTHKTFRGPRGAMILCKKEHAGAIDKAVFPGLQGGPHNHTTAAIAVAAKEASEEGFRAYARQIVVNAQALGRALESRGFRLITGGTDNHLLLIDMTPKGIAGKPYAQALDRAGIVANYNSIPFDPRKPFDPSGLRIGTPAVTSRGMGVAEMERLAAWMDEVAQNVNDEARIARIAAEVAELCRGFPAPGIRL</sequence>
<protein>
    <recommendedName>
        <fullName evidence="1">Serine hydroxymethyltransferase</fullName>
        <shortName evidence="1">SHMT</shortName>
        <shortName evidence="1">Serine methylase</shortName>
        <ecNumber evidence="1">2.1.2.1</ecNumber>
    </recommendedName>
</protein>
<reference key="1">
    <citation type="journal article" date="2007" name="Nat. Biotechnol.">
        <title>Complete genome sequence of the myxobacterium Sorangium cellulosum.</title>
        <authorList>
            <person name="Schneiker S."/>
            <person name="Perlova O."/>
            <person name="Kaiser O."/>
            <person name="Gerth K."/>
            <person name="Alici A."/>
            <person name="Altmeyer M.O."/>
            <person name="Bartels D."/>
            <person name="Bekel T."/>
            <person name="Beyer S."/>
            <person name="Bode E."/>
            <person name="Bode H.B."/>
            <person name="Bolten C.J."/>
            <person name="Choudhuri J.V."/>
            <person name="Doss S."/>
            <person name="Elnakady Y.A."/>
            <person name="Frank B."/>
            <person name="Gaigalat L."/>
            <person name="Goesmann A."/>
            <person name="Groeger C."/>
            <person name="Gross F."/>
            <person name="Jelsbak L."/>
            <person name="Jelsbak L."/>
            <person name="Kalinowski J."/>
            <person name="Kegler C."/>
            <person name="Knauber T."/>
            <person name="Konietzny S."/>
            <person name="Kopp M."/>
            <person name="Krause L."/>
            <person name="Krug D."/>
            <person name="Linke B."/>
            <person name="Mahmud T."/>
            <person name="Martinez-Arias R."/>
            <person name="McHardy A.C."/>
            <person name="Merai M."/>
            <person name="Meyer F."/>
            <person name="Mormann S."/>
            <person name="Munoz-Dorado J."/>
            <person name="Perez J."/>
            <person name="Pradella S."/>
            <person name="Rachid S."/>
            <person name="Raddatz G."/>
            <person name="Rosenau F."/>
            <person name="Rueckert C."/>
            <person name="Sasse F."/>
            <person name="Scharfe M."/>
            <person name="Schuster S.C."/>
            <person name="Suen G."/>
            <person name="Treuner-Lange A."/>
            <person name="Velicer G.J."/>
            <person name="Vorholter F.-J."/>
            <person name="Weissman K.J."/>
            <person name="Welch R.D."/>
            <person name="Wenzel S.C."/>
            <person name="Whitworth D.E."/>
            <person name="Wilhelm S."/>
            <person name="Wittmann C."/>
            <person name="Bloecker H."/>
            <person name="Puehler A."/>
            <person name="Mueller R."/>
        </authorList>
    </citation>
    <scope>NUCLEOTIDE SEQUENCE [LARGE SCALE GENOMIC DNA]</scope>
    <source>
        <strain>So ce56</strain>
    </source>
</reference>
<evidence type="ECO:0000255" key="1">
    <source>
        <dbReference type="HAMAP-Rule" id="MF_00051"/>
    </source>
</evidence>
<accession>A9GPH2</accession>
<feature type="chain" id="PRO_1000074911" description="Serine hydroxymethyltransferase">
    <location>
        <begin position="1"/>
        <end position="423"/>
    </location>
</feature>
<feature type="binding site" evidence="1">
    <location>
        <position position="126"/>
    </location>
    <ligand>
        <name>(6S)-5,6,7,8-tetrahydrofolate</name>
        <dbReference type="ChEBI" id="CHEBI:57453"/>
    </ligand>
</feature>
<feature type="binding site" evidence="1">
    <location>
        <begin position="130"/>
        <end position="132"/>
    </location>
    <ligand>
        <name>(6S)-5,6,7,8-tetrahydrofolate</name>
        <dbReference type="ChEBI" id="CHEBI:57453"/>
    </ligand>
</feature>
<feature type="site" description="Plays an important role in substrate specificity" evidence="1">
    <location>
        <position position="234"/>
    </location>
</feature>
<feature type="modified residue" description="N6-(pyridoxal phosphate)lysine" evidence="1">
    <location>
        <position position="235"/>
    </location>
</feature>
<keyword id="KW-0028">Amino-acid biosynthesis</keyword>
<keyword id="KW-0963">Cytoplasm</keyword>
<keyword id="KW-0554">One-carbon metabolism</keyword>
<keyword id="KW-0663">Pyridoxal phosphate</keyword>
<keyword id="KW-1185">Reference proteome</keyword>
<keyword id="KW-0808">Transferase</keyword>
<dbReference type="EC" id="2.1.2.1" evidence="1"/>
<dbReference type="EMBL" id="AM746676">
    <property type="protein sequence ID" value="CAN96756.1"/>
    <property type="molecule type" value="Genomic_DNA"/>
</dbReference>
<dbReference type="RefSeq" id="WP_012239205.1">
    <property type="nucleotide sequence ID" value="NC_010162.1"/>
</dbReference>
<dbReference type="SMR" id="A9GPH2"/>
<dbReference type="STRING" id="448385.sce6587"/>
<dbReference type="KEGG" id="scl:sce6587"/>
<dbReference type="eggNOG" id="COG0112">
    <property type="taxonomic scope" value="Bacteria"/>
</dbReference>
<dbReference type="HOGENOM" id="CLU_022477_2_1_7"/>
<dbReference type="OrthoDB" id="9803846at2"/>
<dbReference type="BioCyc" id="SCEL448385:SCE_RS33790-MONOMER"/>
<dbReference type="UniPathway" id="UPA00193"/>
<dbReference type="UniPathway" id="UPA00288">
    <property type="reaction ID" value="UER01023"/>
</dbReference>
<dbReference type="Proteomes" id="UP000002139">
    <property type="component" value="Chromosome"/>
</dbReference>
<dbReference type="GO" id="GO:0005829">
    <property type="term" value="C:cytosol"/>
    <property type="evidence" value="ECO:0007669"/>
    <property type="project" value="TreeGrafter"/>
</dbReference>
<dbReference type="GO" id="GO:0004372">
    <property type="term" value="F:glycine hydroxymethyltransferase activity"/>
    <property type="evidence" value="ECO:0007669"/>
    <property type="project" value="UniProtKB-UniRule"/>
</dbReference>
<dbReference type="GO" id="GO:0030170">
    <property type="term" value="F:pyridoxal phosphate binding"/>
    <property type="evidence" value="ECO:0007669"/>
    <property type="project" value="UniProtKB-UniRule"/>
</dbReference>
<dbReference type="GO" id="GO:0019264">
    <property type="term" value="P:glycine biosynthetic process from serine"/>
    <property type="evidence" value="ECO:0007669"/>
    <property type="project" value="UniProtKB-UniRule"/>
</dbReference>
<dbReference type="GO" id="GO:0035999">
    <property type="term" value="P:tetrahydrofolate interconversion"/>
    <property type="evidence" value="ECO:0007669"/>
    <property type="project" value="UniProtKB-UniRule"/>
</dbReference>
<dbReference type="CDD" id="cd00378">
    <property type="entry name" value="SHMT"/>
    <property type="match status" value="1"/>
</dbReference>
<dbReference type="FunFam" id="3.40.640.10:FF:000001">
    <property type="entry name" value="Serine hydroxymethyltransferase"/>
    <property type="match status" value="1"/>
</dbReference>
<dbReference type="Gene3D" id="3.90.1150.10">
    <property type="entry name" value="Aspartate Aminotransferase, domain 1"/>
    <property type="match status" value="1"/>
</dbReference>
<dbReference type="Gene3D" id="3.40.640.10">
    <property type="entry name" value="Type I PLP-dependent aspartate aminotransferase-like (Major domain)"/>
    <property type="match status" value="1"/>
</dbReference>
<dbReference type="HAMAP" id="MF_00051">
    <property type="entry name" value="SHMT"/>
    <property type="match status" value="1"/>
</dbReference>
<dbReference type="InterPro" id="IPR015424">
    <property type="entry name" value="PyrdxlP-dep_Trfase"/>
</dbReference>
<dbReference type="InterPro" id="IPR015421">
    <property type="entry name" value="PyrdxlP-dep_Trfase_major"/>
</dbReference>
<dbReference type="InterPro" id="IPR015422">
    <property type="entry name" value="PyrdxlP-dep_Trfase_small"/>
</dbReference>
<dbReference type="InterPro" id="IPR001085">
    <property type="entry name" value="Ser_HO-MeTrfase"/>
</dbReference>
<dbReference type="InterPro" id="IPR049943">
    <property type="entry name" value="Ser_HO-MeTrfase-like"/>
</dbReference>
<dbReference type="InterPro" id="IPR019798">
    <property type="entry name" value="Ser_HO-MeTrfase_PLP_BS"/>
</dbReference>
<dbReference type="InterPro" id="IPR039429">
    <property type="entry name" value="SHMT-like_dom"/>
</dbReference>
<dbReference type="NCBIfam" id="NF000586">
    <property type="entry name" value="PRK00011.1"/>
    <property type="match status" value="1"/>
</dbReference>
<dbReference type="PANTHER" id="PTHR11680">
    <property type="entry name" value="SERINE HYDROXYMETHYLTRANSFERASE"/>
    <property type="match status" value="1"/>
</dbReference>
<dbReference type="PANTHER" id="PTHR11680:SF50">
    <property type="entry name" value="SERINE HYDROXYMETHYLTRANSFERASE"/>
    <property type="match status" value="1"/>
</dbReference>
<dbReference type="Pfam" id="PF00464">
    <property type="entry name" value="SHMT"/>
    <property type="match status" value="1"/>
</dbReference>
<dbReference type="PIRSF" id="PIRSF000412">
    <property type="entry name" value="SHMT"/>
    <property type="match status" value="1"/>
</dbReference>
<dbReference type="SUPFAM" id="SSF53383">
    <property type="entry name" value="PLP-dependent transferases"/>
    <property type="match status" value="1"/>
</dbReference>
<dbReference type="PROSITE" id="PS00096">
    <property type="entry name" value="SHMT"/>
    <property type="match status" value="1"/>
</dbReference>